<name>ALLA4_DELRA</name>
<reference evidence="7" key="1">
    <citation type="journal article" date="2011" name="Peptides">
        <title>Neuropeptides associated with the central nervous system of the cabbage root fly, Delia radicum (L).</title>
        <authorList>
            <person name="Audsley N."/>
            <person name="Matthews H.J."/>
            <person name="Down R.E."/>
            <person name="Weaver R.J."/>
        </authorList>
    </citation>
    <scope>PROTEIN SEQUENCE</scope>
    <scope>TISSUE SPECIFICITY</scope>
    <scope>MASS SPECTROMETRY</scope>
    <scope>AMIDATION AT LEU-8</scope>
    <source>
        <tissue evidence="3">Abdominal ganglion</tissue>
        <tissue evidence="3">Brain</tissue>
    </source>
</reference>
<reference evidence="7" key="2">
    <citation type="journal article" date="2012" name="PLoS ONE">
        <title>Peptidomics of the agriculturally damaging larval stage of the cabbage root fly Delia radicum (Diptera: Anthomyiidae).</title>
        <authorList>
            <person name="Zoephel J."/>
            <person name="Reiher W."/>
            <person name="Rexer K.-H."/>
            <person name="Kahnt J."/>
            <person name="Wegener C."/>
        </authorList>
    </citation>
    <scope>PROTEIN SEQUENCE</scope>
    <scope>TISSUE SPECIFICITY</scope>
    <scope>DEVELOPMENTAL STAGE</scope>
    <scope>MASS SPECTROMETRY</scope>
    <source>
        <tissue evidence="4">Midgut</tissue>
    </source>
</reference>
<protein>
    <recommendedName>
        <fullName>Allatostatin-A4</fullName>
        <shortName>AST-A4</shortName>
    </recommendedName>
    <alternativeName>
        <fullName evidence="5 6">LPVYNFGL-amide</fullName>
    </alternativeName>
</protein>
<keyword id="KW-0027">Amidation</keyword>
<keyword id="KW-0903">Direct protein sequencing</keyword>
<keyword id="KW-0527">Neuropeptide</keyword>
<keyword id="KW-0964">Secreted</keyword>
<dbReference type="GO" id="GO:0005576">
    <property type="term" value="C:extracellular region"/>
    <property type="evidence" value="ECO:0007669"/>
    <property type="project" value="UniProtKB-SubCell"/>
</dbReference>
<dbReference type="GO" id="GO:0007218">
    <property type="term" value="P:neuropeptide signaling pathway"/>
    <property type="evidence" value="ECO:0007669"/>
    <property type="project" value="UniProtKB-KW"/>
</dbReference>
<evidence type="ECO:0000250" key="1">
    <source>
        <dbReference type="UniProtKB" id="P42559"/>
    </source>
</evidence>
<evidence type="ECO:0000255" key="2"/>
<evidence type="ECO:0000269" key="3">
    <source>
    </source>
</evidence>
<evidence type="ECO:0000269" key="4">
    <source>
    </source>
</evidence>
<evidence type="ECO:0000303" key="5">
    <source>
    </source>
</evidence>
<evidence type="ECO:0000303" key="6">
    <source>
    </source>
</evidence>
<evidence type="ECO:0000305" key="7"/>
<organism>
    <name type="scientific">Delia radicum</name>
    <name type="common">Cabbage root fly</name>
    <name type="synonym">Anthomyia brassicae</name>
    <dbReference type="NCBI Taxonomy" id="30064"/>
    <lineage>
        <taxon>Eukaryota</taxon>
        <taxon>Metazoa</taxon>
        <taxon>Ecdysozoa</taxon>
        <taxon>Arthropoda</taxon>
        <taxon>Hexapoda</taxon>
        <taxon>Insecta</taxon>
        <taxon>Pterygota</taxon>
        <taxon>Neoptera</taxon>
        <taxon>Endopterygota</taxon>
        <taxon>Diptera</taxon>
        <taxon>Brachycera</taxon>
        <taxon>Muscomorpha</taxon>
        <taxon>Muscoidea</taxon>
        <taxon>Anthomyiidae</taxon>
        <taxon>Anthomyiinae</taxon>
        <taxon>Delia</taxon>
    </lineage>
</organism>
<proteinExistence type="evidence at protein level"/>
<feature type="peptide" id="PRO_0000419714" description="Allatostatin-A4">
    <location>
        <begin position="1"/>
        <end position="8"/>
    </location>
</feature>
<feature type="modified residue" description="Leucine amide" evidence="3">
    <location>
        <position position="8"/>
    </location>
</feature>
<comment type="function">
    <text evidence="1">May act as a neurotransmitter or neuromodulator.</text>
</comment>
<comment type="subcellular location">
    <subcellularLocation>
        <location evidence="1">Secreted</location>
    </subcellularLocation>
</comment>
<comment type="tissue specificity">
    <text evidence="3 4">In larvae, detected in midgut but not in the CNS, ring gland, abdominal perisympathetic organs (aPSO) or thoracic perisympathetic organs (tPSO) (at protein level). In adults, expressed in brain, and thoracic-abdominal ganglion but not in corpora cardiaca and corpora allata (at protein level).</text>
</comment>
<comment type="developmental stage">
    <text evidence="3 4">Detected in larvae and adults.</text>
</comment>
<comment type="mass spectrometry" mass="921.5" method="MALDI" evidence="3 4"/>
<comment type="mass spectrometry" mass="921.43" method="MALDI" evidence="3 4"/>
<comment type="similarity">
    <text evidence="2">Belongs to the allatostatin family.</text>
</comment>
<accession>B3EWL8</accession>
<sequence length="8" mass="922">LPVYNFGL</sequence>